<comment type="function">
    <text evidence="1">Involved in the de novo purine biosynthesis. Catalyzes the transfer of formate to 5-phospho-ribosyl-glycinamide (GAR), producing 5-phospho-ribosyl-N-formylglycinamide (FGAR). Formate is provided by PurU via hydrolysis of 10-formyl-tetrahydrofolate.</text>
</comment>
<comment type="catalytic activity">
    <reaction evidence="1">
        <text>N(1)-(5-phospho-beta-D-ribosyl)glycinamide + formate + ATP = N(2)-formyl-N(1)-(5-phospho-beta-D-ribosyl)glycinamide + ADP + phosphate + H(+)</text>
        <dbReference type="Rhea" id="RHEA:24829"/>
        <dbReference type="ChEBI" id="CHEBI:15378"/>
        <dbReference type="ChEBI" id="CHEBI:15740"/>
        <dbReference type="ChEBI" id="CHEBI:30616"/>
        <dbReference type="ChEBI" id="CHEBI:43474"/>
        <dbReference type="ChEBI" id="CHEBI:143788"/>
        <dbReference type="ChEBI" id="CHEBI:147286"/>
        <dbReference type="ChEBI" id="CHEBI:456216"/>
        <dbReference type="EC" id="6.3.1.21"/>
    </reaction>
    <physiologicalReaction direction="left-to-right" evidence="1">
        <dbReference type="Rhea" id="RHEA:24830"/>
    </physiologicalReaction>
</comment>
<comment type="pathway">
    <text evidence="1">Purine metabolism; IMP biosynthesis via de novo pathway; N(2)-formyl-N(1)-(5-phospho-D-ribosyl)glycinamide from N(1)-(5-phospho-D-ribosyl)glycinamide (formate route): step 1/1.</text>
</comment>
<comment type="subunit">
    <text evidence="1">Homodimer.</text>
</comment>
<comment type="similarity">
    <text evidence="1">Belongs to the PurK/PurT family.</text>
</comment>
<organism>
    <name type="scientific">Francisella tularensis subsp. tularensis (strain WY96-3418)</name>
    <dbReference type="NCBI Taxonomy" id="418136"/>
    <lineage>
        <taxon>Bacteria</taxon>
        <taxon>Pseudomonadati</taxon>
        <taxon>Pseudomonadota</taxon>
        <taxon>Gammaproteobacteria</taxon>
        <taxon>Thiotrichales</taxon>
        <taxon>Francisellaceae</taxon>
        <taxon>Francisella</taxon>
    </lineage>
</organism>
<dbReference type="EC" id="6.3.1.21" evidence="1"/>
<dbReference type="EMBL" id="CP000608">
    <property type="protein sequence ID" value="ABO46030.1"/>
    <property type="molecule type" value="Genomic_DNA"/>
</dbReference>
<dbReference type="RefSeq" id="WP_003024402.1">
    <property type="nucleotide sequence ID" value="NC_009257.1"/>
</dbReference>
<dbReference type="SMR" id="A4IVS8"/>
<dbReference type="KEGG" id="ftw:FTW_0020"/>
<dbReference type="HOGENOM" id="CLU_011534_1_3_6"/>
<dbReference type="UniPathway" id="UPA00074">
    <property type="reaction ID" value="UER00127"/>
</dbReference>
<dbReference type="GO" id="GO:0005829">
    <property type="term" value="C:cytosol"/>
    <property type="evidence" value="ECO:0007669"/>
    <property type="project" value="TreeGrafter"/>
</dbReference>
<dbReference type="GO" id="GO:0005524">
    <property type="term" value="F:ATP binding"/>
    <property type="evidence" value="ECO:0007669"/>
    <property type="project" value="UniProtKB-UniRule"/>
</dbReference>
<dbReference type="GO" id="GO:0000287">
    <property type="term" value="F:magnesium ion binding"/>
    <property type="evidence" value="ECO:0007669"/>
    <property type="project" value="InterPro"/>
</dbReference>
<dbReference type="GO" id="GO:0043815">
    <property type="term" value="F:phosphoribosylglycinamide formyltransferase 2 activity"/>
    <property type="evidence" value="ECO:0007669"/>
    <property type="project" value="UniProtKB-UniRule"/>
</dbReference>
<dbReference type="GO" id="GO:0004644">
    <property type="term" value="F:phosphoribosylglycinamide formyltransferase activity"/>
    <property type="evidence" value="ECO:0007669"/>
    <property type="project" value="InterPro"/>
</dbReference>
<dbReference type="GO" id="GO:0006189">
    <property type="term" value="P:'de novo' IMP biosynthetic process"/>
    <property type="evidence" value="ECO:0007669"/>
    <property type="project" value="UniProtKB-UniRule"/>
</dbReference>
<dbReference type="Gene3D" id="3.40.50.20">
    <property type="match status" value="1"/>
</dbReference>
<dbReference type="Gene3D" id="3.30.1490.20">
    <property type="entry name" value="ATP-grasp fold, A domain"/>
    <property type="match status" value="1"/>
</dbReference>
<dbReference type="Gene3D" id="3.30.470.20">
    <property type="entry name" value="ATP-grasp fold, B domain"/>
    <property type="match status" value="1"/>
</dbReference>
<dbReference type="HAMAP" id="MF_01643">
    <property type="entry name" value="PurT"/>
    <property type="match status" value="1"/>
</dbReference>
<dbReference type="InterPro" id="IPR011761">
    <property type="entry name" value="ATP-grasp"/>
</dbReference>
<dbReference type="InterPro" id="IPR003135">
    <property type="entry name" value="ATP-grasp_carboxylate-amine"/>
</dbReference>
<dbReference type="InterPro" id="IPR013815">
    <property type="entry name" value="ATP_grasp_subdomain_1"/>
</dbReference>
<dbReference type="InterPro" id="IPR016185">
    <property type="entry name" value="PreATP-grasp_dom_sf"/>
</dbReference>
<dbReference type="InterPro" id="IPR005862">
    <property type="entry name" value="PurT"/>
</dbReference>
<dbReference type="InterPro" id="IPR054350">
    <property type="entry name" value="PurT/PurK_preATP-grasp"/>
</dbReference>
<dbReference type="InterPro" id="IPR048740">
    <property type="entry name" value="PurT_C"/>
</dbReference>
<dbReference type="InterPro" id="IPR011054">
    <property type="entry name" value="Rudment_hybrid_motif"/>
</dbReference>
<dbReference type="NCBIfam" id="NF006766">
    <property type="entry name" value="PRK09288.1"/>
    <property type="match status" value="1"/>
</dbReference>
<dbReference type="NCBIfam" id="TIGR01142">
    <property type="entry name" value="purT"/>
    <property type="match status" value="1"/>
</dbReference>
<dbReference type="PANTHER" id="PTHR43055">
    <property type="entry name" value="FORMATE-DEPENDENT PHOSPHORIBOSYLGLYCINAMIDE FORMYLTRANSFERASE"/>
    <property type="match status" value="1"/>
</dbReference>
<dbReference type="PANTHER" id="PTHR43055:SF1">
    <property type="entry name" value="FORMATE-DEPENDENT PHOSPHORIBOSYLGLYCINAMIDE FORMYLTRANSFERASE"/>
    <property type="match status" value="1"/>
</dbReference>
<dbReference type="Pfam" id="PF02222">
    <property type="entry name" value="ATP-grasp"/>
    <property type="match status" value="1"/>
</dbReference>
<dbReference type="Pfam" id="PF21244">
    <property type="entry name" value="PurT_C"/>
    <property type="match status" value="1"/>
</dbReference>
<dbReference type="Pfam" id="PF22660">
    <property type="entry name" value="RS_preATP-grasp-like"/>
    <property type="match status" value="1"/>
</dbReference>
<dbReference type="SUPFAM" id="SSF56059">
    <property type="entry name" value="Glutathione synthetase ATP-binding domain-like"/>
    <property type="match status" value="1"/>
</dbReference>
<dbReference type="SUPFAM" id="SSF52440">
    <property type="entry name" value="PreATP-grasp domain"/>
    <property type="match status" value="1"/>
</dbReference>
<dbReference type="SUPFAM" id="SSF51246">
    <property type="entry name" value="Rudiment single hybrid motif"/>
    <property type="match status" value="1"/>
</dbReference>
<dbReference type="PROSITE" id="PS50975">
    <property type="entry name" value="ATP_GRASP"/>
    <property type="match status" value="1"/>
</dbReference>
<name>PURT_FRATW</name>
<accession>A4IVS8</accession>
<reference key="1">
    <citation type="journal article" date="2007" name="PLoS ONE">
        <title>Complete genomic characterization of a pathogenic A.II strain of Francisella tularensis subspecies tularensis.</title>
        <authorList>
            <person name="Beckstrom-Sternberg S.M."/>
            <person name="Auerbach R.K."/>
            <person name="Godbole S."/>
            <person name="Pearson J.V."/>
            <person name="Beckstrom-Sternberg J.S."/>
            <person name="Deng Z."/>
            <person name="Munk C."/>
            <person name="Kubota K."/>
            <person name="Zhou Y."/>
            <person name="Bruce D."/>
            <person name="Noronha J."/>
            <person name="Scheuermann R.H."/>
            <person name="Wang A."/>
            <person name="Wei X."/>
            <person name="Wang J."/>
            <person name="Hao J."/>
            <person name="Wagner D.M."/>
            <person name="Brettin T.S."/>
            <person name="Brown N."/>
            <person name="Gilna P."/>
            <person name="Keim P.S."/>
        </authorList>
    </citation>
    <scope>NUCLEOTIDE SEQUENCE [LARGE SCALE GENOMIC DNA]</scope>
    <source>
        <strain>WY96-3418</strain>
    </source>
</reference>
<sequence>MNISNIKIMLLGSGELGKEFIIAAQRLGIHTIVVDRYKNAPAMQVAHESYVIDMLNSDALEQLILAKNPTYIVPEIEAINTDSLVKLEAHNFNIIPCAKATKLTMDRQGIRALAAQQLNLQTSKFAFANSEQEYLDVIQSIGLPFVIKPVMSSSGKGQSIVKEHNEIKKAWDYAQNGSRGHAKGVIVEQFIDFDYEITLLTVRHKDGTSFCDPIGHIQKDGDYRFSWQPHTMPDTALAKSQEIAKEITDALGGYGVFGVELFIKGDEVFFNEVSPRPHDTGMVTLISQNINEFELHLRAIVGLPIPDIQTLQPSASAAILLEGDTANASICGIDKALADANVDIRIFGKKEIHGKRRMGVVLAKAQNTHIALETSKQALAHIHLTK</sequence>
<gene>
    <name evidence="1" type="primary">purT</name>
    <name type="ordered locus">FTW_0020</name>
</gene>
<protein>
    <recommendedName>
        <fullName evidence="1">Formate-dependent phosphoribosylglycinamide formyltransferase</fullName>
        <ecNumber evidence="1">6.3.1.21</ecNumber>
    </recommendedName>
    <alternativeName>
        <fullName evidence="1">5'-phosphoribosylglycinamide transformylase 2</fullName>
    </alternativeName>
    <alternativeName>
        <fullName evidence="1">Formate-dependent GAR transformylase</fullName>
    </alternativeName>
    <alternativeName>
        <fullName evidence="1">GAR transformylase 2</fullName>
        <shortName evidence="1">GART 2</shortName>
    </alternativeName>
    <alternativeName>
        <fullName evidence="1">Non-folate glycinamide ribonucleotide transformylase</fullName>
    </alternativeName>
    <alternativeName>
        <fullName evidence="1">Phosphoribosylglycinamide formyltransferase 2</fullName>
    </alternativeName>
</protein>
<keyword id="KW-0067">ATP-binding</keyword>
<keyword id="KW-0436">Ligase</keyword>
<keyword id="KW-0460">Magnesium</keyword>
<keyword id="KW-0479">Metal-binding</keyword>
<keyword id="KW-0547">Nucleotide-binding</keyword>
<keyword id="KW-0658">Purine biosynthesis</keyword>
<proteinExistence type="inferred from homology"/>
<evidence type="ECO:0000255" key="1">
    <source>
        <dbReference type="HAMAP-Rule" id="MF_01643"/>
    </source>
</evidence>
<feature type="chain" id="PRO_0000319173" description="Formate-dependent phosphoribosylglycinamide formyltransferase">
    <location>
        <begin position="1"/>
        <end position="386"/>
    </location>
</feature>
<feature type="domain" description="ATP-grasp" evidence="1">
    <location>
        <begin position="112"/>
        <end position="301"/>
    </location>
</feature>
<feature type="binding site" evidence="1">
    <location>
        <begin position="15"/>
        <end position="16"/>
    </location>
    <ligand>
        <name>N(1)-(5-phospho-beta-D-ribosyl)glycinamide</name>
        <dbReference type="ChEBI" id="CHEBI:143788"/>
    </ligand>
</feature>
<feature type="binding site" evidence="1">
    <location>
        <position position="75"/>
    </location>
    <ligand>
        <name>N(1)-(5-phospho-beta-D-ribosyl)glycinamide</name>
        <dbReference type="ChEBI" id="CHEBI:143788"/>
    </ligand>
</feature>
<feature type="binding site" evidence="1">
    <location>
        <position position="107"/>
    </location>
    <ligand>
        <name>ATP</name>
        <dbReference type="ChEBI" id="CHEBI:30616"/>
    </ligand>
</feature>
<feature type="binding site" evidence="1">
    <location>
        <position position="148"/>
    </location>
    <ligand>
        <name>ATP</name>
        <dbReference type="ChEBI" id="CHEBI:30616"/>
    </ligand>
</feature>
<feature type="binding site" evidence="1">
    <location>
        <begin position="153"/>
        <end position="158"/>
    </location>
    <ligand>
        <name>ATP</name>
        <dbReference type="ChEBI" id="CHEBI:30616"/>
    </ligand>
</feature>
<feature type="binding site" evidence="1">
    <location>
        <begin position="188"/>
        <end position="191"/>
    </location>
    <ligand>
        <name>ATP</name>
        <dbReference type="ChEBI" id="CHEBI:30616"/>
    </ligand>
</feature>
<feature type="binding site" evidence="1">
    <location>
        <position position="196"/>
    </location>
    <ligand>
        <name>ATP</name>
        <dbReference type="ChEBI" id="CHEBI:30616"/>
    </ligand>
</feature>
<feature type="binding site" evidence="1">
    <location>
        <position position="260"/>
    </location>
    <ligand>
        <name>Mg(2+)</name>
        <dbReference type="ChEBI" id="CHEBI:18420"/>
    </ligand>
</feature>
<feature type="binding site" evidence="1">
    <location>
        <position position="272"/>
    </location>
    <ligand>
        <name>Mg(2+)</name>
        <dbReference type="ChEBI" id="CHEBI:18420"/>
    </ligand>
</feature>
<feature type="binding site" evidence="1">
    <location>
        <position position="279"/>
    </location>
    <ligand>
        <name>N(1)-(5-phospho-beta-D-ribosyl)glycinamide</name>
        <dbReference type="ChEBI" id="CHEBI:143788"/>
    </ligand>
</feature>
<feature type="binding site" evidence="1">
    <location>
        <position position="349"/>
    </location>
    <ligand>
        <name>N(1)-(5-phospho-beta-D-ribosyl)glycinamide</name>
        <dbReference type="ChEBI" id="CHEBI:143788"/>
    </ligand>
</feature>
<feature type="binding site" evidence="1">
    <location>
        <begin position="356"/>
        <end position="357"/>
    </location>
    <ligand>
        <name>N(1)-(5-phospho-beta-D-ribosyl)glycinamide</name>
        <dbReference type="ChEBI" id="CHEBI:143788"/>
    </ligand>
</feature>